<comment type="function">
    <text evidence="1 6 7 10">Adapter protein involved in invadopodia and podosome formation and extracellular matrix degradation. Binds matrix metalloproteinases (ADAMs), NADPH oxidases (NOXs) and phosphoinositides. Acts as an organizer protein that allows NOX1- or NOX3-dependent reactive oxygen species (ROS) generation and ROS localization. Plays a role in mitotic clonal expansion during the immediate early stage of adipocyte differentiation (By similarity).</text>
</comment>
<comment type="subunit">
    <text evidence="1 6 7 8 10">Interacts with ADAM15 (By similarity). Interacts with NOXO1. Interacts (via SH3 domains) with NOXA1; the interaction is direct. Interacts with FASLG.</text>
</comment>
<comment type="subcellular location">
    <subcellularLocation>
        <location evidence="1">Cytoplasm</location>
    </subcellularLocation>
    <subcellularLocation>
        <location evidence="1">Cell projection</location>
        <location evidence="1">Podosome</location>
    </subcellularLocation>
    <text evidence="1">Cytoplasmic in normal cells and localizes to podosomes in SRC-transformed cells.</text>
</comment>
<comment type="tissue specificity">
    <text evidence="9">Expressed in fibroblasts.</text>
</comment>
<comment type="domain">
    <text evidence="1">The PX domain is required for podosome localization because of its ability to bind phosphatidylinositol 3-phosphate (PtdIns(3)P) and phosphatidylinositol 3,4-bisphosphate (PtdIns(3,4)P2) and, to a lesser extent, phosphatidylinositol 4-phosphate (PtdIns(4)P), phosphatidylinositol 5-phosphate (PtdIns(5)P), and phosphatidylinositol 3,5-bisphosphate (PtdIns(3,5)P2). Binds to the third intramolecular SH3 domain (By similarity).</text>
</comment>
<comment type="PTM">
    <text evidence="1">Phosphorylated in SRC-transformed cells.</text>
</comment>
<comment type="disease" evidence="9">
    <disease id="DI-02812">
        <name>Frank-Ter Haar syndrome</name>
        <acronym>FTHS</acronym>
        <description>A syndrome characterized by brachycephaly, wide fontanels, prominent forehead, hypertelorism, prominent eyes, macrocornea with or without glaucoma, full cheeks, small chin, bowing of the long bones and flexion deformity of the fingers.</description>
        <dbReference type="MIM" id="249420"/>
    </disease>
    <text>The disease is caused by variants affecting the gene represented in this entry.</text>
</comment>
<comment type="similarity">
    <text evidence="11">Belongs to the SH3PXD2 family.</text>
</comment>
<sequence>MPPRRSIVEVKVLDVQKRRVPNKHYVYIIRVTWSSGSTEAIYRRYSKFFDLQMQMLDKFPMEGGQKDPKQRIIPFLPGKILFRRSHIRDVAVKRLIPIDEYCKALIQLPPYISQCDEVLQFFETRPEDLNPPKEEHIGKKKSGGDQTSVDPMVLEQYVVVANYQKQESSEISLSVGQVVDIIEKNESGWWFVSTAEEQGWVPATCLEGQDGVQDEFSLQPEEEEKYTVIYPYTARDQDEMNLERGAVVEVIQKNLEGWWKIRYQGKEGWAPASYLKKNSGEPLPPKPGPGSPSHPGALDLDGVSRQQNAVGREKELLSSQRDGRFEGRPVPDGDAKQRSPKMRQRPPPRRDMTIPRGLNLPKPPIPPQVEEEYYTIAEFQTTIPDGISFQAGLKVEVIEKNLSGWWYIQIEDKEGWAPATFIDKYKKTSNASRPNFLAPLPHEVTQLRLGEAAALENNTGSEATGPSRPLPDAPHGVMDSGLPWSKDWKGSKDVLRKASSDMSASAGYEEISDPDMEEKPSLPPRKESIIKSEGELLERERERQRTEQLRGPTPKPPGVILPMMPAKHIPPARDSRRPEPKPDKSRLFQLKNDMGLECGHKVLAKEVKKPNLRPISKSKTDLPEEKPDATPQNPFLKSRPQVRPKPAPSPKTEPPQGEDQVDICNLRSKLRPAKSQDKSLLDGEGPQAVGGQDVAFSRSFLPGEGPGRAQDRTGKQDGLSPKEISCRAPPRPAKTTDPVSKSVPVPLQEAPQQRPVVPPRRPPPPKKTSSSSRPLPEVRGPQCEGHESRAAPTPGRALLVPPKAKPFLSNSLGGQDDTRGKGSLGPWGTGKIGENREKAAAASVPNADGLKDSLYVAVADFEGDKDTSSFQEGTVFEVREKNSSGWWFCQVLSGAPSWEGWIPSNYLRKKP</sequence>
<accession>A1X283</accession>
<accession>B6F0V2</accession>
<accession>Q9P2Q1</accession>
<organism>
    <name type="scientific">Homo sapiens</name>
    <name type="common">Human</name>
    <dbReference type="NCBI Taxonomy" id="9606"/>
    <lineage>
        <taxon>Eukaryota</taxon>
        <taxon>Metazoa</taxon>
        <taxon>Chordata</taxon>
        <taxon>Craniata</taxon>
        <taxon>Vertebrata</taxon>
        <taxon>Euteleostomi</taxon>
        <taxon>Mammalia</taxon>
        <taxon>Eutheria</taxon>
        <taxon>Euarchontoglires</taxon>
        <taxon>Primates</taxon>
        <taxon>Haplorrhini</taxon>
        <taxon>Catarrhini</taxon>
        <taxon>Hominidae</taxon>
        <taxon>Homo</taxon>
    </lineage>
</organism>
<gene>
    <name type="primary">SH3PXD2B</name>
    <name type="synonym">FAD49</name>
    <name type="synonym">KIAA1295</name>
    <name type="synonym">TKS4</name>
</gene>
<evidence type="ECO:0000250" key="1"/>
<evidence type="ECO:0000250" key="2">
    <source>
        <dbReference type="UniProtKB" id="A2AAY5"/>
    </source>
</evidence>
<evidence type="ECO:0000255" key="3">
    <source>
        <dbReference type="PROSITE-ProRule" id="PRU00147"/>
    </source>
</evidence>
<evidence type="ECO:0000255" key="4">
    <source>
        <dbReference type="PROSITE-ProRule" id="PRU00192"/>
    </source>
</evidence>
<evidence type="ECO:0000256" key="5">
    <source>
        <dbReference type="SAM" id="MobiDB-lite"/>
    </source>
</evidence>
<evidence type="ECO:0000269" key="6">
    <source>
    </source>
</evidence>
<evidence type="ECO:0000269" key="7">
    <source>
    </source>
</evidence>
<evidence type="ECO:0000269" key="8">
    <source>
    </source>
</evidence>
<evidence type="ECO:0000269" key="9">
    <source>
    </source>
</evidence>
<evidence type="ECO:0000269" key="10">
    <source>
    </source>
</evidence>
<evidence type="ECO:0000305" key="11"/>
<evidence type="ECO:0007744" key="12">
    <source>
    </source>
</evidence>
<evidence type="ECO:0007744" key="13">
    <source>
    </source>
</evidence>
<protein>
    <recommendedName>
        <fullName>SH3 and PX domain-containing protein 2B</fullName>
    </recommendedName>
    <alternativeName>
        <fullName>Adapter protein HOFI</fullName>
    </alternativeName>
    <alternativeName>
        <fullName>Factor for adipocyte differentiation 49</fullName>
    </alternativeName>
    <alternativeName>
        <fullName>Tyrosine kinase substrate with four SH3 domains</fullName>
    </alternativeName>
</protein>
<proteinExistence type="evidence at protein level"/>
<name>SPD2B_HUMAN</name>
<keyword id="KW-0965">Cell junction</keyword>
<keyword id="KW-0966">Cell projection</keyword>
<keyword id="KW-0963">Cytoplasm</keyword>
<keyword id="KW-0221">Differentiation</keyword>
<keyword id="KW-0225">Disease variant</keyword>
<keyword id="KW-0597">Phosphoprotein</keyword>
<keyword id="KW-1267">Proteomics identification</keyword>
<keyword id="KW-1185">Reference proteome</keyword>
<keyword id="KW-0677">Repeat</keyword>
<keyword id="KW-0728">SH3 domain</keyword>
<feature type="chain" id="PRO_0000312201" description="SH3 and PX domain-containing protein 2B">
    <location>
        <begin position="1"/>
        <end position="911"/>
    </location>
</feature>
<feature type="domain" description="PX" evidence="3">
    <location>
        <begin position="5"/>
        <end position="129"/>
    </location>
</feature>
<feature type="domain" description="SH3 1" evidence="4">
    <location>
        <begin position="152"/>
        <end position="211"/>
    </location>
</feature>
<feature type="domain" description="SH3 2" evidence="4">
    <location>
        <begin position="221"/>
        <end position="280"/>
    </location>
</feature>
<feature type="domain" description="SH3 3" evidence="4">
    <location>
        <begin position="368"/>
        <end position="427"/>
    </location>
</feature>
<feature type="domain" description="SH3 4" evidence="4">
    <location>
        <begin position="850"/>
        <end position="911"/>
    </location>
</feature>
<feature type="region of interest" description="Disordered" evidence="5">
    <location>
        <begin position="275"/>
        <end position="366"/>
    </location>
</feature>
<feature type="region of interest" description="Disordered" evidence="5">
    <location>
        <begin position="458"/>
        <end position="834"/>
    </location>
</feature>
<feature type="compositionally biased region" description="Pro residues" evidence="5">
    <location>
        <begin position="282"/>
        <end position="292"/>
    </location>
</feature>
<feature type="compositionally biased region" description="Basic and acidic residues" evidence="5">
    <location>
        <begin position="311"/>
        <end position="337"/>
    </location>
</feature>
<feature type="compositionally biased region" description="Basic residues" evidence="5">
    <location>
        <begin position="338"/>
        <end position="347"/>
    </location>
</feature>
<feature type="compositionally biased region" description="Basic and acidic residues" evidence="5">
    <location>
        <begin position="486"/>
        <end position="499"/>
    </location>
</feature>
<feature type="compositionally biased region" description="Basic and acidic residues" evidence="5">
    <location>
        <begin position="517"/>
        <end position="548"/>
    </location>
</feature>
<feature type="compositionally biased region" description="Basic and acidic residues" evidence="5">
    <location>
        <begin position="571"/>
        <end position="586"/>
    </location>
</feature>
<feature type="compositionally biased region" description="Basic and acidic residues" evidence="5">
    <location>
        <begin position="598"/>
        <end position="609"/>
    </location>
</feature>
<feature type="compositionally biased region" description="Basic and acidic residues" evidence="5">
    <location>
        <begin position="618"/>
        <end position="628"/>
    </location>
</feature>
<feature type="compositionally biased region" description="Pro residues" evidence="5">
    <location>
        <begin position="643"/>
        <end position="653"/>
    </location>
</feature>
<feature type="compositionally biased region" description="Pro residues" evidence="5">
    <location>
        <begin position="756"/>
        <end position="766"/>
    </location>
</feature>
<feature type="compositionally biased region" description="Gly residues" evidence="5">
    <location>
        <begin position="822"/>
        <end position="831"/>
    </location>
</feature>
<feature type="modified residue" description="Phosphotyrosine" evidence="2">
    <location>
        <position position="25"/>
    </location>
</feature>
<feature type="modified residue" description="Phosphoserine" evidence="13">
    <location>
        <position position="279"/>
    </location>
</feature>
<feature type="modified residue" description="Phosphoserine" evidence="12 13">
    <location>
        <position position="291"/>
    </location>
</feature>
<feature type="modified residue" description="Phosphoserine" evidence="2">
    <location>
        <position position="499"/>
    </location>
</feature>
<feature type="modified residue" description="Phosphoserine" evidence="2">
    <location>
        <position position="528"/>
    </location>
</feature>
<feature type="modified residue" description="Phosphoserine" evidence="2">
    <location>
        <position position="843"/>
    </location>
</feature>
<feature type="sequence variant" id="VAR_063764" description="In FTHS; dbSNP:rs267607046." evidence="9">
    <original>R</original>
    <variation>W</variation>
    <location>
        <position position="43"/>
    </location>
</feature>
<feature type="sequence variant" id="VAR_046226" description="In dbSNP:rs6880739.">
    <original>Y</original>
    <variation>F</variation>
    <location>
        <position position="101"/>
    </location>
</feature>
<feature type="sequence conflict" description="In Ref. 2; AAZ99795." evidence="11" ref="2">
    <original>I</original>
    <variation>V</variation>
    <location>
        <position position="28"/>
    </location>
</feature>
<feature type="sequence conflict" description="In Ref. 2; AAZ99795." evidence="11" ref="2">
    <original>I</original>
    <variation>T</variation>
    <location>
        <position position="72"/>
    </location>
</feature>
<feature type="sequence conflict" description="In Ref. 2; AAZ99795." evidence="11" ref="2">
    <original>R</original>
    <variation>G</variation>
    <location>
        <position position="712"/>
    </location>
</feature>
<reference key="1">
    <citation type="journal article" date="2008" name="FEBS J.">
        <title>A novel gene, fad49, plays a crucial role in the immediate early stage of adipocyte differentiation via involvement in mitotic clonal expansion.</title>
        <authorList>
            <person name="Hishida T."/>
            <person name="Eguchi T."/>
            <person name="Osada S."/>
            <person name="Nishizuka M."/>
            <person name="Imagawa M."/>
        </authorList>
    </citation>
    <scope>NUCLEOTIDE SEQUENCE [MRNA]</scope>
</reference>
<reference key="2">
    <citation type="submission" date="2005-06" db="EMBL/GenBank/DDBJ databases">
        <title>Identification and characterization of HOFI, a novel homolog of FISH.</title>
        <authorList>
            <person name="Lanyi A."/>
            <person name="Geiszt M."/>
        </authorList>
    </citation>
    <scope>NUCLEOTIDE SEQUENCE [MRNA]</scope>
</reference>
<reference key="3">
    <citation type="journal article" date="2004" name="Nature">
        <title>The DNA sequence and comparative analysis of human chromosome 5.</title>
        <authorList>
            <person name="Schmutz J."/>
            <person name="Martin J."/>
            <person name="Terry A."/>
            <person name="Couronne O."/>
            <person name="Grimwood J."/>
            <person name="Lowry S."/>
            <person name="Gordon L.A."/>
            <person name="Scott D."/>
            <person name="Xie G."/>
            <person name="Huang W."/>
            <person name="Hellsten U."/>
            <person name="Tran-Gyamfi M."/>
            <person name="She X."/>
            <person name="Prabhakar S."/>
            <person name="Aerts A."/>
            <person name="Altherr M."/>
            <person name="Bajorek E."/>
            <person name="Black S."/>
            <person name="Branscomb E."/>
            <person name="Caoile C."/>
            <person name="Challacombe J.F."/>
            <person name="Chan Y.M."/>
            <person name="Denys M."/>
            <person name="Detter J.C."/>
            <person name="Escobar J."/>
            <person name="Flowers D."/>
            <person name="Fotopulos D."/>
            <person name="Glavina T."/>
            <person name="Gomez M."/>
            <person name="Gonzales E."/>
            <person name="Goodstein D."/>
            <person name="Grigoriev I."/>
            <person name="Groza M."/>
            <person name="Hammon N."/>
            <person name="Hawkins T."/>
            <person name="Haydu L."/>
            <person name="Israni S."/>
            <person name="Jett J."/>
            <person name="Kadner K."/>
            <person name="Kimball H."/>
            <person name="Kobayashi A."/>
            <person name="Lopez F."/>
            <person name="Lou Y."/>
            <person name="Martinez D."/>
            <person name="Medina C."/>
            <person name="Morgan J."/>
            <person name="Nandkeshwar R."/>
            <person name="Noonan J.P."/>
            <person name="Pitluck S."/>
            <person name="Pollard M."/>
            <person name="Predki P."/>
            <person name="Priest J."/>
            <person name="Ramirez L."/>
            <person name="Retterer J."/>
            <person name="Rodriguez A."/>
            <person name="Rogers S."/>
            <person name="Salamov A."/>
            <person name="Salazar A."/>
            <person name="Thayer N."/>
            <person name="Tice H."/>
            <person name="Tsai M."/>
            <person name="Ustaszewska A."/>
            <person name="Vo N."/>
            <person name="Wheeler J."/>
            <person name="Wu K."/>
            <person name="Yang J."/>
            <person name="Dickson M."/>
            <person name="Cheng J.-F."/>
            <person name="Eichler E.E."/>
            <person name="Olsen A."/>
            <person name="Pennacchio L.A."/>
            <person name="Rokhsar D.S."/>
            <person name="Richardson P."/>
            <person name="Lucas S.M."/>
            <person name="Myers R.M."/>
            <person name="Rubin E.M."/>
        </authorList>
    </citation>
    <scope>NUCLEOTIDE SEQUENCE [LARGE SCALE GENOMIC DNA]</scope>
</reference>
<reference key="4">
    <citation type="journal article" date="2000" name="DNA Res.">
        <title>Prediction of the coding sequences of unidentified human genes. XVI. The complete sequences of 150 new cDNA clones from brain which code for large proteins in vitro.</title>
        <authorList>
            <person name="Nagase T."/>
            <person name="Kikuno R."/>
            <person name="Ishikawa K."/>
            <person name="Hirosawa M."/>
            <person name="Ohara O."/>
        </authorList>
    </citation>
    <scope>NUCLEOTIDE SEQUENCE [LARGE SCALE MRNA] OF 362-911</scope>
    <source>
        <tissue>Brain</tissue>
    </source>
</reference>
<reference key="5">
    <citation type="journal article" date="2003" name="J. Biol. Chem.">
        <title>The adaptor protein fish associates with members of the ADAMs family and localizes to podosomes of Src-transformed cells.</title>
        <authorList>
            <person name="Abram C.L."/>
            <person name="Seals D.F."/>
            <person name="Pass I."/>
            <person name="Salinsky D."/>
            <person name="Maurer L."/>
            <person name="Roth T.M."/>
            <person name="Courtneidge S.A."/>
        </authorList>
    </citation>
    <scope>FUNCTION</scope>
    <scope>SUBCELLULAR LOCATION</scope>
    <scope>DOMAIN PX</scope>
    <scope>INTERACTION WITH ADAM12; ADAM15 AND ADAM19</scope>
</reference>
<reference key="6">
    <citation type="journal article" date="2008" name="Proc. Natl. Acad. Sci. U.S.A.">
        <title>A quantitative atlas of mitotic phosphorylation.</title>
        <authorList>
            <person name="Dephoure N."/>
            <person name="Zhou C."/>
            <person name="Villen J."/>
            <person name="Beausoleil S.A."/>
            <person name="Bakalarski C.E."/>
            <person name="Elledge S.J."/>
            <person name="Gygi S.P."/>
        </authorList>
    </citation>
    <scope>PHOSPHORYLATION [LARGE SCALE ANALYSIS] AT SER-291</scope>
    <scope>IDENTIFICATION BY MASS SPECTROMETRY [LARGE SCALE ANALYSIS]</scope>
    <source>
        <tissue>Cervix carcinoma</tissue>
    </source>
</reference>
<reference key="7">
    <citation type="journal article" date="2009" name="BMC Immunol.">
        <title>Identification of SH3 domain interaction partners of human FasL (CD178) by phage display screening.</title>
        <authorList>
            <person name="Voss M."/>
            <person name="Lettau M."/>
            <person name="Janssen O."/>
        </authorList>
    </citation>
    <scope>INTERACTION WITH FASLG</scope>
</reference>
<reference key="8">
    <citation type="journal article" date="2009" name="Sci. Signal.">
        <title>Novel p47(phox)-related organizers regulate localized NADPH oxidase 1 (Nox1) activity.</title>
        <authorList>
            <person name="Gianni D."/>
            <person name="Diaz B."/>
            <person name="Taulet N."/>
            <person name="Fowler B."/>
            <person name="Courtneidge S.A."/>
            <person name="Bokoch G.M."/>
        </authorList>
    </citation>
    <scope>FUNCTION</scope>
    <scope>INTERACTION WITH NOXA1</scope>
</reference>
<reference key="9">
    <citation type="journal article" date="2010" name="Am. J. Hum. Genet.">
        <title>Disruption of the podosome adaptor protein TKS4 (SH3PXD2B) causes the skeletal dysplasia, eye, and cardiac abnormalities of Frank-Ter Haar Syndrome.</title>
        <authorList>
            <person name="Iqbal Z."/>
            <person name="Cejudo-Martin P."/>
            <person name="de Brouwer A."/>
            <person name="van der Zwaag B."/>
            <person name="Ruiz-Lozano P."/>
            <person name="Scimia M.C."/>
            <person name="Lindsey J.D."/>
            <person name="Weinreb R."/>
            <person name="Albrecht B."/>
            <person name="Megarbane A."/>
            <person name="Alanay Y."/>
            <person name="Ben-Neriah Z."/>
            <person name="Amenduni M."/>
            <person name="Artuso R."/>
            <person name="Veltman J.A."/>
            <person name="van Beusekom E."/>
            <person name="Oudakker A."/>
            <person name="Millan J.L."/>
            <person name="Hennekam R."/>
            <person name="Hamel B."/>
            <person name="Courtneidge S.A."/>
            <person name="van Bokhoven H."/>
        </authorList>
    </citation>
    <scope>TISSUE SPECIFICITY</scope>
    <scope>VARIANT FTHS TRP-43</scope>
</reference>
<reference key="10">
    <citation type="journal article" date="2010" name="Sci. Signal.">
        <title>Quantitative phosphoproteomics reveals widespread full phosphorylation site occupancy during mitosis.</title>
        <authorList>
            <person name="Olsen J.V."/>
            <person name="Vermeulen M."/>
            <person name="Santamaria A."/>
            <person name="Kumar C."/>
            <person name="Miller M.L."/>
            <person name="Jensen L.J."/>
            <person name="Gnad F."/>
            <person name="Cox J."/>
            <person name="Jensen T.S."/>
            <person name="Nigg E.A."/>
            <person name="Brunak S."/>
            <person name="Mann M."/>
        </authorList>
    </citation>
    <scope>PHOSPHORYLATION [LARGE SCALE ANALYSIS] AT SER-279 AND SER-291</scope>
    <scope>IDENTIFICATION BY MASS SPECTROMETRY [LARGE SCALE ANALYSIS]</scope>
    <source>
        <tissue>Cervix carcinoma</tissue>
    </source>
</reference>
<reference key="11">
    <citation type="journal article" date="2011" name="Eur. J. Cell Biol.">
        <title>Direct interaction between Tks proteins and the N-terminal proline-rich region (PRR) of NoxA1 mediates Nox1-dependent ROS generation.</title>
        <authorList>
            <person name="Gianni D."/>
            <person name="Dermardirossian C."/>
            <person name="Bokoch G.M."/>
        </authorList>
    </citation>
    <scope>FUNCTION</scope>
    <scope>INTERACTION WITH NOXA1 AND NOXO1</scope>
</reference>
<reference key="12">
    <citation type="journal article" date="2011" name="Sci. Signal.">
        <title>System-wide temporal characterization of the proteome and phosphoproteome of human embryonic stem cell differentiation.</title>
        <authorList>
            <person name="Rigbolt K.T."/>
            <person name="Prokhorova T.A."/>
            <person name="Akimov V."/>
            <person name="Henningsen J."/>
            <person name="Johansen P.T."/>
            <person name="Kratchmarova I."/>
            <person name="Kassem M."/>
            <person name="Mann M."/>
            <person name="Olsen J.V."/>
            <person name="Blagoev B."/>
        </authorList>
    </citation>
    <scope>IDENTIFICATION BY MASS SPECTROMETRY [LARGE SCALE ANALYSIS]</scope>
</reference>
<reference key="13">
    <citation type="journal article" date="2014" name="Mol. Cell. Proteomics">
        <title>Immunoaffinity enrichment and mass spectrometry analysis of protein methylation.</title>
        <authorList>
            <person name="Guo A."/>
            <person name="Gu H."/>
            <person name="Zhou J."/>
            <person name="Mulhern D."/>
            <person name="Wang Y."/>
            <person name="Lee K.A."/>
            <person name="Yang V."/>
            <person name="Aguiar M."/>
            <person name="Kornhauser J."/>
            <person name="Jia X."/>
            <person name="Ren J."/>
            <person name="Beausoleil S.A."/>
            <person name="Silva J.C."/>
            <person name="Vemulapalli V."/>
            <person name="Bedford M.T."/>
            <person name="Comb M.J."/>
        </authorList>
    </citation>
    <scope>IDENTIFICATION BY MASS SPECTROMETRY [LARGE SCALE ANALYSIS]</scope>
    <source>
        <tissue>Colon carcinoma</tissue>
    </source>
</reference>
<dbReference type="EMBL" id="AB430862">
    <property type="protein sequence ID" value="BAG81977.1"/>
    <property type="molecule type" value="mRNA"/>
</dbReference>
<dbReference type="EMBL" id="DQ109556">
    <property type="protein sequence ID" value="AAZ99795.1"/>
    <property type="molecule type" value="mRNA"/>
</dbReference>
<dbReference type="EMBL" id="AC008671">
    <property type="status" value="NOT_ANNOTATED_CDS"/>
    <property type="molecule type" value="Genomic_DNA"/>
</dbReference>
<dbReference type="EMBL" id="AC011407">
    <property type="status" value="NOT_ANNOTATED_CDS"/>
    <property type="molecule type" value="Genomic_DNA"/>
</dbReference>
<dbReference type="EMBL" id="AC090064">
    <property type="status" value="NOT_ANNOTATED_CDS"/>
    <property type="molecule type" value="Genomic_DNA"/>
</dbReference>
<dbReference type="EMBL" id="AB037716">
    <property type="protein sequence ID" value="BAA92533.1"/>
    <property type="molecule type" value="mRNA"/>
</dbReference>
<dbReference type="CCDS" id="CCDS34291.1"/>
<dbReference type="RefSeq" id="NP_001017995.1">
    <property type="nucleotide sequence ID" value="NM_001017995.3"/>
</dbReference>
<dbReference type="SMR" id="A1X283"/>
<dbReference type="BioGRID" id="130149">
    <property type="interactions" value="76"/>
</dbReference>
<dbReference type="FunCoup" id="A1X283">
    <property type="interactions" value="615"/>
</dbReference>
<dbReference type="IntAct" id="A1X283">
    <property type="interactions" value="32"/>
</dbReference>
<dbReference type="MINT" id="A1X283"/>
<dbReference type="STRING" id="9606.ENSP00000309714"/>
<dbReference type="GlyGen" id="A1X283">
    <property type="glycosylation" value="3 sites, 1 N-linked glycan (1 site), 1 O-linked glycan (1 site)"/>
</dbReference>
<dbReference type="iPTMnet" id="A1X283"/>
<dbReference type="PhosphoSitePlus" id="A1X283"/>
<dbReference type="BioMuta" id="SH3PXD2B"/>
<dbReference type="jPOST" id="A1X283"/>
<dbReference type="MassIVE" id="A1X283"/>
<dbReference type="PaxDb" id="9606-ENSP00000309714"/>
<dbReference type="PeptideAtlas" id="A1X283"/>
<dbReference type="ProteomicsDB" id="156"/>
<dbReference type="Pumba" id="A1X283"/>
<dbReference type="ABCD" id="A1X283">
    <property type="antibodies" value="20 sequenced antibodies"/>
</dbReference>
<dbReference type="Antibodypedia" id="49665">
    <property type="antibodies" value="86 antibodies from 15 providers"/>
</dbReference>
<dbReference type="DNASU" id="285590"/>
<dbReference type="Ensembl" id="ENST00000311601.6">
    <property type="protein sequence ID" value="ENSP00000309714.5"/>
    <property type="gene ID" value="ENSG00000174705.13"/>
</dbReference>
<dbReference type="GeneID" id="285590"/>
<dbReference type="KEGG" id="hsa:285590"/>
<dbReference type="MANE-Select" id="ENST00000311601.6">
    <property type="protein sequence ID" value="ENSP00000309714.5"/>
    <property type="RefSeq nucleotide sequence ID" value="NM_001017995.3"/>
    <property type="RefSeq protein sequence ID" value="NP_001017995.1"/>
</dbReference>
<dbReference type="UCSC" id="uc003mbr.3">
    <property type="organism name" value="human"/>
</dbReference>
<dbReference type="AGR" id="HGNC:29242"/>
<dbReference type="CTD" id="285590"/>
<dbReference type="DisGeNET" id="285590"/>
<dbReference type="GeneCards" id="SH3PXD2B"/>
<dbReference type="HGNC" id="HGNC:29242">
    <property type="gene designation" value="SH3PXD2B"/>
</dbReference>
<dbReference type="HPA" id="ENSG00000174705">
    <property type="expression patterns" value="Low tissue specificity"/>
</dbReference>
<dbReference type="MalaCards" id="SH3PXD2B"/>
<dbReference type="MIM" id="249420">
    <property type="type" value="phenotype"/>
</dbReference>
<dbReference type="MIM" id="613293">
    <property type="type" value="gene"/>
</dbReference>
<dbReference type="neXtProt" id="NX_A1X283"/>
<dbReference type="OpenTargets" id="ENSG00000174705"/>
<dbReference type="Orphanet" id="137834">
    <property type="disease" value="Frank-Ter Haar syndrome"/>
</dbReference>
<dbReference type="PharmGKB" id="PA134864119"/>
<dbReference type="VEuPathDB" id="HostDB:ENSG00000174705"/>
<dbReference type="eggNOG" id="KOG0905">
    <property type="taxonomic scope" value="Eukaryota"/>
</dbReference>
<dbReference type="GeneTree" id="ENSGT00940000158396"/>
<dbReference type="HOGENOM" id="CLU_013051_1_0_1"/>
<dbReference type="InParanoid" id="A1X283"/>
<dbReference type="OMA" id="PMIPTKH"/>
<dbReference type="OrthoDB" id="10255964at2759"/>
<dbReference type="PAN-GO" id="A1X283">
    <property type="GO annotations" value="3 GO annotations based on evolutionary models"/>
</dbReference>
<dbReference type="PhylomeDB" id="A1X283"/>
<dbReference type="TreeFam" id="TF329347"/>
<dbReference type="PathwayCommons" id="A1X283"/>
<dbReference type="SignaLink" id="A1X283"/>
<dbReference type="SIGNOR" id="A1X283"/>
<dbReference type="BioGRID-ORCS" id="285590">
    <property type="hits" value="17 hits in 1147 CRISPR screens"/>
</dbReference>
<dbReference type="ChiTaRS" id="SH3PXD2B">
    <property type="organism name" value="human"/>
</dbReference>
<dbReference type="GenomeRNAi" id="285590"/>
<dbReference type="Pharos" id="A1X283">
    <property type="development level" value="Tbio"/>
</dbReference>
<dbReference type="PRO" id="PR:A1X283"/>
<dbReference type="Proteomes" id="UP000005640">
    <property type="component" value="Chromosome 5"/>
</dbReference>
<dbReference type="RNAct" id="A1X283">
    <property type="molecule type" value="protein"/>
</dbReference>
<dbReference type="Bgee" id="ENSG00000174705">
    <property type="expression patterns" value="Expressed in decidua and 155 other cell types or tissues"/>
</dbReference>
<dbReference type="ExpressionAtlas" id="A1X283">
    <property type="expression patterns" value="baseline and differential"/>
</dbReference>
<dbReference type="GO" id="GO:0070161">
    <property type="term" value="C:anchoring junction"/>
    <property type="evidence" value="ECO:0007669"/>
    <property type="project" value="UniProtKB-KW"/>
</dbReference>
<dbReference type="GO" id="GO:0042995">
    <property type="term" value="C:cell projection"/>
    <property type="evidence" value="ECO:0007669"/>
    <property type="project" value="UniProtKB-KW"/>
</dbReference>
<dbReference type="GO" id="GO:0005737">
    <property type="term" value="C:cytoplasm"/>
    <property type="evidence" value="ECO:0000250"/>
    <property type="project" value="UniProtKB"/>
</dbReference>
<dbReference type="GO" id="GO:0002102">
    <property type="term" value="C:podosome"/>
    <property type="evidence" value="ECO:0000250"/>
    <property type="project" value="UniProtKB"/>
</dbReference>
<dbReference type="GO" id="GO:0080025">
    <property type="term" value="F:phosphatidylinositol-3,5-bisphosphate binding"/>
    <property type="evidence" value="ECO:0000250"/>
    <property type="project" value="UniProtKB"/>
</dbReference>
<dbReference type="GO" id="GO:0032266">
    <property type="term" value="F:phosphatidylinositol-3-phosphate binding"/>
    <property type="evidence" value="ECO:0000250"/>
    <property type="project" value="UniProtKB"/>
</dbReference>
<dbReference type="GO" id="GO:0010314">
    <property type="term" value="F:phosphatidylinositol-5-phosphate binding"/>
    <property type="evidence" value="ECO:0000250"/>
    <property type="project" value="UniProtKB"/>
</dbReference>
<dbReference type="GO" id="GO:0042169">
    <property type="term" value="F:SH2 domain binding"/>
    <property type="evidence" value="ECO:0000250"/>
    <property type="project" value="UniProtKB"/>
</dbReference>
<dbReference type="GO" id="GO:0016176">
    <property type="term" value="F:superoxide-generating NADPH oxidase activator activity"/>
    <property type="evidence" value="ECO:0000318"/>
    <property type="project" value="GO_Central"/>
</dbReference>
<dbReference type="GO" id="GO:0060612">
    <property type="term" value="P:adipose tissue development"/>
    <property type="evidence" value="ECO:0000250"/>
    <property type="project" value="UniProtKB"/>
</dbReference>
<dbReference type="GO" id="GO:0060348">
    <property type="term" value="P:bone development"/>
    <property type="evidence" value="ECO:0000315"/>
    <property type="project" value="UniProtKB"/>
</dbReference>
<dbReference type="GO" id="GO:0030154">
    <property type="term" value="P:cell differentiation"/>
    <property type="evidence" value="ECO:0007669"/>
    <property type="project" value="UniProtKB-KW"/>
</dbReference>
<dbReference type="GO" id="GO:0022617">
    <property type="term" value="P:extracellular matrix disassembly"/>
    <property type="evidence" value="ECO:0000315"/>
    <property type="project" value="UniProtKB"/>
</dbReference>
<dbReference type="GO" id="GO:0001654">
    <property type="term" value="P:eye development"/>
    <property type="evidence" value="ECO:0000315"/>
    <property type="project" value="UniProtKB"/>
</dbReference>
<dbReference type="GO" id="GO:0007507">
    <property type="term" value="P:heart development"/>
    <property type="evidence" value="ECO:0000315"/>
    <property type="project" value="UniProtKB"/>
</dbReference>
<dbReference type="GO" id="GO:0071800">
    <property type="term" value="P:podosome assembly"/>
    <property type="evidence" value="ECO:0000250"/>
    <property type="project" value="UniProtKB"/>
</dbReference>
<dbReference type="GO" id="GO:0072657">
    <property type="term" value="P:protein localization to membrane"/>
    <property type="evidence" value="ECO:0000314"/>
    <property type="project" value="UniProtKB"/>
</dbReference>
<dbReference type="GO" id="GO:0001501">
    <property type="term" value="P:skeletal system development"/>
    <property type="evidence" value="ECO:0000315"/>
    <property type="project" value="UniProtKB"/>
</dbReference>
<dbReference type="GO" id="GO:0042554">
    <property type="term" value="P:superoxide anion generation"/>
    <property type="evidence" value="ECO:0000318"/>
    <property type="project" value="GO_Central"/>
</dbReference>
<dbReference type="GO" id="GO:0006801">
    <property type="term" value="P:superoxide metabolic process"/>
    <property type="evidence" value="ECO:0000314"/>
    <property type="project" value="UniProtKB"/>
</dbReference>
<dbReference type="CDD" id="cd06888">
    <property type="entry name" value="PX_FISH"/>
    <property type="match status" value="1"/>
</dbReference>
<dbReference type="CDD" id="cd12075">
    <property type="entry name" value="SH3_Tks4_1"/>
    <property type="match status" value="1"/>
</dbReference>
<dbReference type="CDD" id="cd12076">
    <property type="entry name" value="SH3_Tks4_2"/>
    <property type="match status" value="1"/>
</dbReference>
<dbReference type="CDD" id="cd12078">
    <property type="entry name" value="SH3_Tks4_3"/>
    <property type="match status" value="1"/>
</dbReference>
<dbReference type="CDD" id="cd12018">
    <property type="entry name" value="SH3_Tks4_4"/>
    <property type="match status" value="1"/>
</dbReference>
<dbReference type="FunFam" id="2.30.30.40:FF:000020">
    <property type="entry name" value="SH3 and PX domain-containing protein 2A"/>
    <property type="match status" value="1"/>
</dbReference>
<dbReference type="FunFam" id="2.30.30.40:FF:000031">
    <property type="entry name" value="SH3 and PX domain-containing protein 2A"/>
    <property type="match status" value="1"/>
</dbReference>
<dbReference type="FunFam" id="2.30.30.40:FF:000042">
    <property type="entry name" value="SH3 and PX domain-containing protein 2A"/>
    <property type="match status" value="1"/>
</dbReference>
<dbReference type="FunFam" id="2.30.30.40:FF:000082">
    <property type="entry name" value="SH3 and PX domain-containing protein 2B"/>
    <property type="match status" value="1"/>
</dbReference>
<dbReference type="FunFam" id="3.30.1520.10:FF:000005">
    <property type="entry name" value="SH3 and PX domain-containing protein 2B"/>
    <property type="match status" value="1"/>
</dbReference>
<dbReference type="Gene3D" id="3.30.1520.10">
    <property type="entry name" value="Phox-like domain"/>
    <property type="match status" value="1"/>
</dbReference>
<dbReference type="Gene3D" id="2.30.30.40">
    <property type="entry name" value="SH3 Domains"/>
    <property type="match status" value="4"/>
</dbReference>
<dbReference type="InterPro" id="IPR051228">
    <property type="entry name" value="NADPH_Oxidase/PX-Domain"/>
</dbReference>
<dbReference type="InterPro" id="IPR001683">
    <property type="entry name" value="PX_dom"/>
</dbReference>
<dbReference type="InterPro" id="IPR036871">
    <property type="entry name" value="PX_dom_sf"/>
</dbReference>
<dbReference type="InterPro" id="IPR036028">
    <property type="entry name" value="SH3-like_dom_sf"/>
</dbReference>
<dbReference type="InterPro" id="IPR001452">
    <property type="entry name" value="SH3_domain"/>
</dbReference>
<dbReference type="InterPro" id="IPR037961">
    <property type="entry name" value="SH3PXD2_PX"/>
</dbReference>
<dbReference type="InterPro" id="IPR035477">
    <property type="entry name" value="SH3PXD2B_SH3_1"/>
</dbReference>
<dbReference type="InterPro" id="IPR035478">
    <property type="entry name" value="SH3PXD2B_SH3_2"/>
</dbReference>
<dbReference type="InterPro" id="IPR035479">
    <property type="entry name" value="SH3PXD2B_SH3_3"/>
</dbReference>
<dbReference type="InterPro" id="IPR035480">
    <property type="entry name" value="SH3PXD2B_SH3_4"/>
</dbReference>
<dbReference type="PANTHER" id="PTHR15706:SF26">
    <property type="entry name" value="SH3 AND PX DOMAIN-CONTAINING PROTEIN 2B"/>
    <property type="match status" value="1"/>
</dbReference>
<dbReference type="PANTHER" id="PTHR15706">
    <property type="entry name" value="SH3 MULTIPLE DOMAIN"/>
    <property type="match status" value="1"/>
</dbReference>
<dbReference type="Pfam" id="PF00787">
    <property type="entry name" value="PX"/>
    <property type="match status" value="1"/>
</dbReference>
<dbReference type="Pfam" id="PF00018">
    <property type="entry name" value="SH3_1"/>
    <property type="match status" value="3"/>
</dbReference>
<dbReference type="Pfam" id="PF07653">
    <property type="entry name" value="SH3_2"/>
    <property type="match status" value="1"/>
</dbReference>
<dbReference type="SMART" id="SM00312">
    <property type="entry name" value="PX"/>
    <property type="match status" value="1"/>
</dbReference>
<dbReference type="SMART" id="SM00326">
    <property type="entry name" value="SH3"/>
    <property type="match status" value="4"/>
</dbReference>
<dbReference type="SUPFAM" id="SSF64268">
    <property type="entry name" value="PX domain"/>
    <property type="match status" value="1"/>
</dbReference>
<dbReference type="SUPFAM" id="SSF50044">
    <property type="entry name" value="SH3-domain"/>
    <property type="match status" value="4"/>
</dbReference>
<dbReference type="PROSITE" id="PS50195">
    <property type="entry name" value="PX"/>
    <property type="match status" value="1"/>
</dbReference>
<dbReference type="PROSITE" id="PS50002">
    <property type="entry name" value="SH3"/>
    <property type="match status" value="4"/>
</dbReference>